<comment type="catalytic activity">
    <reaction>
        <text>S-ubiquitinyl-[E2 ubiquitin-conjugating enzyme]-L-cysteine + [acceptor protein]-L-lysine = [E2 ubiquitin-conjugating enzyme]-L-cysteine + N(6)-ubiquitinyl-[acceptor protein]-L-lysine.</text>
        <dbReference type="EC" id="2.3.2.27"/>
    </reaction>
</comment>
<comment type="pathway">
    <text>Protein modification; protein ubiquitination.</text>
</comment>
<name>XB31_ORYSJ</name>
<dbReference type="EC" id="2.3.2.27"/>
<dbReference type="EMBL" id="AP003627">
    <property type="protein sequence ID" value="BAB63825.1"/>
    <property type="molecule type" value="Genomic_DNA"/>
</dbReference>
<dbReference type="EMBL" id="AP008207">
    <property type="protein sequence ID" value="BAF07468.1"/>
    <property type="molecule type" value="Genomic_DNA"/>
</dbReference>
<dbReference type="EMBL" id="AP014957">
    <property type="protein sequence ID" value="BAS76454.1"/>
    <property type="molecule type" value="Genomic_DNA"/>
</dbReference>
<dbReference type="EMBL" id="AK106014">
    <property type="protein sequence ID" value="BAG97508.1"/>
    <property type="molecule type" value="mRNA"/>
</dbReference>
<dbReference type="RefSeq" id="XP_015612477.1">
    <property type="nucleotide sequence ID" value="XM_015756991.1"/>
</dbReference>
<dbReference type="SMR" id="Q94CT7"/>
<dbReference type="STRING" id="39947.Q94CT7"/>
<dbReference type="PaxDb" id="39947-Q94CT7"/>
<dbReference type="EnsemblPlants" id="Os01t0974400-01">
    <property type="protein sequence ID" value="Os01t0974400-01"/>
    <property type="gene ID" value="Os01g0974400"/>
</dbReference>
<dbReference type="Gramene" id="Os01t0974400-01">
    <property type="protein sequence ID" value="Os01t0974400-01"/>
    <property type="gene ID" value="Os01g0974400"/>
</dbReference>
<dbReference type="KEGG" id="dosa:Os01g0974400"/>
<dbReference type="eggNOG" id="KOG4177">
    <property type="taxonomic scope" value="Eukaryota"/>
</dbReference>
<dbReference type="HOGENOM" id="CLU_049095_1_0_1"/>
<dbReference type="InParanoid" id="Q94CT7"/>
<dbReference type="OMA" id="MEICCIC"/>
<dbReference type="OrthoDB" id="194358at2759"/>
<dbReference type="UniPathway" id="UPA00143"/>
<dbReference type="Proteomes" id="UP000000763">
    <property type="component" value="Chromosome 1"/>
</dbReference>
<dbReference type="Proteomes" id="UP000059680">
    <property type="component" value="Chromosome 1"/>
</dbReference>
<dbReference type="GO" id="GO:0016740">
    <property type="term" value="F:transferase activity"/>
    <property type="evidence" value="ECO:0007669"/>
    <property type="project" value="UniProtKB-KW"/>
</dbReference>
<dbReference type="GO" id="GO:0008270">
    <property type="term" value="F:zinc ion binding"/>
    <property type="evidence" value="ECO:0007669"/>
    <property type="project" value="UniProtKB-KW"/>
</dbReference>
<dbReference type="GO" id="GO:0016567">
    <property type="term" value="P:protein ubiquitination"/>
    <property type="evidence" value="ECO:0007669"/>
    <property type="project" value="UniProtKB-UniPathway"/>
</dbReference>
<dbReference type="Gene3D" id="1.25.40.20">
    <property type="entry name" value="Ankyrin repeat-containing domain"/>
    <property type="match status" value="2"/>
</dbReference>
<dbReference type="Gene3D" id="3.30.40.10">
    <property type="entry name" value="Zinc/RING finger domain, C3HC4 (zinc finger)"/>
    <property type="match status" value="1"/>
</dbReference>
<dbReference type="InterPro" id="IPR002110">
    <property type="entry name" value="Ankyrin_rpt"/>
</dbReference>
<dbReference type="InterPro" id="IPR036770">
    <property type="entry name" value="Ankyrin_rpt-contain_sf"/>
</dbReference>
<dbReference type="InterPro" id="IPR056760">
    <property type="entry name" value="RING_XB3-like"/>
</dbReference>
<dbReference type="InterPro" id="IPR001841">
    <property type="entry name" value="Znf_RING"/>
</dbReference>
<dbReference type="InterPro" id="IPR013083">
    <property type="entry name" value="Znf_RING/FYVE/PHD"/>
</dbReference>
<dbReference type="PANTHER" id="PTHR24173">
    <property type="entry name" value="ANKYRIN REPEAT CONTAINING"/>
    <property type="match status" value="1"/>
</dbReference>
<dbReference type="PANTHER" id="PTHR24173:SF90">
    <property type="entry name" value="RING-TYPE DOMAIN-CONTAINING PROTEIN"/>
    <property type="match status" value="1"/>
</dbReference>
<dbReference type="Pfam" id="PF00023">
    <property type="entry name" value="Ank"/>
    <property type="match status" value="1"/>
</dbReference>
<dbReference type="Pfam" id="PF12796">
    <property type="entry name" value="Ank_2"/>
    <property type="match status" value="2"/>
</dbReference>
<dbReference type="Pfam" id="PF24921">
    <property type="entry name" value="RING_XB3-XBAT31"/>
    <property type="match status" value="1"/>
</dbReference>
<dbReference type="SMART" id="SM00248">
    <property type="entry name" value="ANK"/>
    <property type="match status" value="5"/>
</dbReference>
<dbReference type="SUPFAM" id="SSF48403">
    <property type="entry name" value="Ankyrin repeat"/>
    <property type="match status" value="1"/>
</dbReference>
<dbReference type="SUPFAM" id="SSF57850">
    <property type="entry name" value="RING/U-box"/>
    <property type="match status" value="1"/>
</dbReference>
<dbReference type="PROSITE" id="PS50297">
    <property type="entry name" value="ANK_REP_REGION"/>
    <property type="match status" value="1"/>
</dbReference>
<dbReference type="PROSITE" id="PS50088">
    <property type="entry name" value="ANK_REPEAT"/>
    <property type="match status" value="4"/>
</dbReference>
<dbReference type="PROSITE" id="PS50089">
    <property type="entry name" value="ZF_RING_2"/>
    <property type="match status" value="1"/>
</dbReference>
<gene>
    <name type="primary">XBOS31</name>
    <name type="ordered locus">Os01g0974400</name>
    <name type="ordered locus">LOC_Os01g74320</name>
    <name type="ORF">P0459B04.9</name>
</gene>
<feature type="chain" id="PRO_0000395745" description="Probable E3 ubiquitin-protein ligase XBOS31">
    <location>
        <begin position="1"/>
        <end position="446"/>
    </location>
</feature>
<feature type="repeat" description="ANK 1">
    <location>
        <begin position="46"/>
        <end position="75"/>
    </location>
</feature>
<feature type="repeat" description="ANK 2">
    <location>
        <begin position="79"/>
        <end position="108"/>
    </location>
</feature>
<feature type="repeat" description="ANK 3">
    <location>
        <begin position="113"/>
        <end position="142"/>
    </location>
</feature>
<feature type="repeat" description="ANK 4">
    <location>
        <begin position="160"/>
        <end position="189"/>
    </location>
</feature>
<feature type="repeat" description="ANK 5">
    <location>
        <begin position="197"/>
        <end position="227"/>
    </location>
</feature>
<feature type="zinc finger region" description="RING-type" evidence="1">
    <location>
        <begin position="317"/>
        <end position="366"/>
    </location>
</feature>
<feature type="region of interest" description="Disordered" evidence="2">
    <location>
        <begin position="376"/>
        <end position="401"/>
    </location>
</feature>
<reference key="1">
    <citation type="journal article" date="2002" name="Nature">
        <title>The genome sequence and structure of rice chromosome 1.</title>
        <authorList>
            <person name="Sasaki T."/>
            <person name="Matsumoto T."/>
            <person name="Yamamoto K."/>
            <person name="Sakata K."/>
            <person name="Baba T."/>
            <person name="Katayose Y."/>
            <person name="Wu J."/>
            <person name="Niimura Y."/>
            <person name="Cheng Z."/>
            <person name="Nagamura Y."/>
            <person name="Antonio B.A."/>
            <person name="Kanamori H."/>
            <person name="Hosokawa S."/>
            <person name="Masukawa M."/>
            <person name="Arikawa K."/>
            <person name="Chiden Y."/>
            <person name="Hayashi M."/>
            <person name="Okamoto M."/>
            <person name="Ando T."/>
            <person name="Aoki H."/>
            <person name="Arita K."/>
            <person name="Hamada M."/>
            <person name="Harada C."/>
            <person name="Hijishita S."/>
            <person name="Honda M."/>
            <person name="Ichikawa Y."/>
            <person name="Idonuma A."/>
            <person name="Iijima M."/>
            <person name="Ikeda M."/>
            <person name="Ikeno M."/>
            <person name="Ito S."/>
            <person name="Ito T."/>
            <person name="Ito Y."/>
            <person name="Ito Y."/>
            <person name="Iwabuchi A."/>
            <person name="Kamiya K."/>
            <person name="Karasawa W."/>
            <person name="Katagiri S."/>
            <person name="Kikuta A."/>
            <person name="Kobayashi N."/>
            <person name="Kono I."/>
            <person name="Machita K."/>
            <person name="Maehara T."/>
            <person name="Mizuno H."/>
            <person name="Mizubayashi T."/>
            <person name="Mukai Y."/>
            <person name="Nagasaki H."/>
            <person name="Nakashima M."/>
            <person name="Nakama Y."/>
            <person name="Nakamichi Y."/>
            <person name="Nakamura M."/>
            <person name="Namiki N."/>
            <person name="Negishi M."/>
            <person name="Ohta I."/>
            <person name="Ono N."/>
            <person name="Saji S."/>
            <person name="Sakai K."/>
            <person name="Shibata M."/>
            <person name="Shimokawa T."/>
            <person name="Shomura A."/>
            <person name="Song J."/>
            <person name="Takazaki Y."/>
            <person name="Terasawa K."/>
            <person name="Tsuji K."/>
            <person name="Waki K."/>
            <person name="Yamagata H."/>
            <person name="Yamane H."/>
            <person name="Yoshiki S."/>
            <person name="Yoshihara R."/>
            <person name="Yukawa K."/>
            <person name="Zhong H."/>
            <person name="Iwama H."/>
            <person name="Endo T."/>
            <person name="Ito H."/>
            <person name="Hahn J.H."/>
            <person name="Kim H.-I."/>
            <person name="Eun M.-Y."/>
            <person name="Yano M."/>
            <person name="Jiang J."/>
            <person name="Gojobori T."/>
        </authorList>
    </citation>
    <scope>NUCLEOTIDE SEQUENCE [LARGE SCALE GENOMIC DNA]</scope>
    <source>
        <strain>cv. Nipponbare</strain>
    </source>
</reference>
<reference key="2">
    <citation type="journal article" date="2005" name="Nature">
        <title>The map-based sequence of the rice genome.</title>
        <authorList>
            <consortium name="International rice genome sequencing project (IRGSP)"/>
        </authorList>
    </citation>
    <scope>NUCLEOTIDE SEQUENCE [LARGE SCALE GENOMIC DNA]</scope>
    <source>
        <strain>cv. Nipponbare</strain>
    </source>
</reference>
<reference key="3">
    <citation type="journal article" date="2008" name="Nucleic Acids Res.">
        <title>The rice annotation project database (RAP-DB): 2008 update.</title>
        <authorList>
            <consortium name="The rice annotation project (RAP)"/>
        </authorList>
    </citation>
    <scope>GENOME REANNOTATION</scope>
    <source>
        <strain>cv. Nipponbare</strain>
    </source>
</reference>
<reference key="4">
    <citation type="journal article" date="2013" name="Rice">
        <title>Improvement of the Oryza sativa Nipponbare reference genome using next generation sequence and optical map data.</title>
        <authorList>
            <person name="Kawahara Y."/>
            <person name="de la Bastide M."/>
            <person name="Hamilton J.P."/>
            <person name="Kanamori H."/>
            <person name="McCombie W.R."/>
            <person name="Ouyang S."/>
            <person name="Schwartz D.C."/>
            <person name="Tanaka T."/>
            <person name="Wu J."/>
            <person name="Zhou S."/>
            <person name="Childs K.L."/>
            <person name="Davidson R.M."/>
            <person name="Lin H."/>
            <person name="Quesada-Ocampo L."/>
            <person name="Vaillancourt B."/>
            <person name="Sakai H."/>
            <person name="Lee S.S."/>
            <person name="Kim J."/>
            <person name="Numa H."/>
            <person name="Itoh T."/>
            <person name="Buell C.R."/>
            <person name="Matsumoto T."/>
        </authorList>
    </citation>
    <scope>GENOME REANNOTATION</scope>
    <source>
        <strain>cv. Nipponbare</strain>
    </source>
</reference>
<reference key="5">
    <citation type="journal article" date="2003" name="Science">
        <title>Collection, mapping, and annotation of over 28,000 cDNA clones from japonica rice.</title>
        <authorList>
            <consortium name="The rice full-length cDNA consortium"/>
        </authorList>
    </citation>
    <scope>NUCLEOTIDE SEQUENCE [LARGE SCALE MRNA]</scope>
    <source>
        <strain>cv. Nipponbare</strain>
    </source>
</reference>
<proteinExistence type="evidence at transcript level"/>
<evidence type="ECO:0000255" key="1">
    <source>
        <dbReference type="PROSITE-ProRule" id="PRU00175"/>
    </source>
</evidence>
<evidence type="ECO:0000256" key="2">
    <source>
        <dbReference type="SAM" id="MobiDB-lite"/>
    </source>
</evidence>
<protein>
    <recommendedName>
        <fullName>Probable E3 ubiquitin-protein ligase XBOS31</fullName>
        <ecNumber>2.3.2.27</ecNumber>
    </recommendedName>
    <alternativeName>
        <fullName>Ankyrin repeat domain and RING finger-containing protein XBOS31</fullName>
    </alternativeName>
    <alternativeName>
        <fullName>RING-type E3 ubiquitin transferase XBOS31</fullName>
    </alternativeName>
    <alternativeName>
        <fullName>XB3 protein homolog 1</fullName>
    </alternativeName>
</protein>
<organism>
    <name type="scientific">Oryza sativa subsp. japonica</name>
    <name type="common">Rice</name>
    <dbReference type="NCBI Taxonomy" id="39947"/>
    <lineage>
        <taxon>Eukaryota</taxon>
        <taxon>Viridiplantae</taxon>
        <taxon>Streptophyta</taxon>
        <taxon>Embryophyta</taxon>
        <taxon>Tracheophyta</taxon>
        <taxon>Spermatophyta</taxon>
        <taxon>Magnoliopsida</taxon>
        <taxon>Liliopsida</taxon>
        <taxon>Poales</taxon>
        <taxon>Poaceae</taxon>
        <taxon>BOP clade</taxon>
        <taxon>Oryzoideae</taxon>
        <taxon>Oryzeae</taxon>
        <taxon>Oryzinae</taxon>
        <taxon>Oryza</taxon>
        <taxon>Oryza sativa</taxon>
    </lineage>
</organism>
<keyword id="KW-0040">ANK repeat</keyword>
<keyword id="KW-0479">Metal-binding</keyword>
<keyword id="KW-1185">Reference proteome</keyword>
<keyword id="KW-0677">Repeat</keyword>
<keyword id="KW-0808">Transferase</keyword>
<keyword id="KW-0833">Ubl conjugation pathway</keyword>
<keyword id="KW-0862">Zinc</keyword>
<keyword id="KW-0863">Zinc-finger</keyword>
<sequence>MGHGLSCSRDTDEYDLFRAAQLGDIHALSALLAADPALARRATVYDRFTALHIAAANGRLQVLSMLLDRDGDVDVLSRKKQTPLMVAAMRGNTECVVRLLRGGANVLTFDSPRARTCLHHAAYYGHAECLQAILGAAAQAQGPVAASWGFARFVNVRDERGATPLHLAARHARASCVRLLLDKGAIVSAPTAVYGFPGSTALHLAARAGSMECIRELLAWGADRLQRDSAGRIAYAVAMRRGHRACAALLNPAAAEPIVWPSPLKFIGELEADAKALLEAALMEANREREKRILHGSDINIKGGDEEEESEDEEEACNICFEQACSMEVKECGHQMCAACTLAICCHSKPNPKTLLLHPPACPFCRTTISRLVVATTNSNKTNSRRRSRSRSSSFKGGLSSAMGSFSRIGRGSGRLVVDGSSVGELADKPDHDFSSVAAAAAICDT</sequence>
<accession>Q94CT7</accession>
<accession>A0A0P0VDK8</accession>